<dbReference type="GO" id="GO:0005576">
    <property type="term" value="C:extracellular region"/>
    <property type="evidence" value="ECO:0007669"/>
    <property type="project" value="UniProtKB-SubCell"/>
</dbReference>
<evidence type="ECO:0000269" key="1">
    <source ref="1"/>
</evidence>
<evidence type="ECO:0000303" key="2">
    <source ref="1"/>
</evidence>
<evidence type="ECO:0000305" key="3"/>
<organism>
    <name type="scientific">Pithecopus hypochondrialis</name>
    <name type="common">Orange-legged leaf frog</name>
    <name type="synonym">Phyllomedusa hypochondrialis</name>
    <dbReference type="NCBI Taxonomy" id="317381"/>
    <lineage>
        <taxon>Eukaryota</taxon>
        <taxon>Metazoa</taxon>
        <taxon>Chordata</taxon>
        <taxon>Craniata</taxon>
        <taxon>Vertebrata</taxon>
        <taxon>Euteleostomi</taxon>
        <taxon>Amphibia</taxon>
        <taxon>Batrachia</taxon>
        <taxon>Anura</taxon>
        <taxon>Neobatrachia</taxon>
        <taxon>Hyloidea</taxon>
        <taxon>Hylidae</taxon>
        <taxon>Phyllomedusinae</taxon>
        <taxon>Pithecopus</taxon>
    </lineage>
</organism>
<accession>P84521</accession>
<proteinExistence type="evidence at protein level"/>
<sequence>QQGEGGPYGGLSPLRFS</sequence>
<comment type="subcellular location">
    <subcellularLocation>
        <location evidence="3">Secreted</location>
    </subcellularLocation>
</comment>
<comment type="mass spectrometry"/>
<protein>
    <recommendedName>
        <fullName>Bioactive peptide 1</fullName>
    </recommendedName>
</protein>
<feature type="peptide" id="PRO_0000043871" description="Bioactive peptide 1">
    <location>
        <begin position="1"/>
        <end position="17"/>
    </location>
</feature>
<feature type="modified residue" description="Pyrrolidone carboxylic acid" evidence="1">
    <location>
        <position position="1"/>
    </location>
</feature>
<feature type="unsure residue" description="L or I" evidence="2">
    <location>
        <position position="11"/>
    </location>
</feature>
<feature type="unsure residue" description="L or I" evidence="2">
    <location>
        <position position="14"/>
    </location>
</feature>
<reference key="1">
    <citation type="submission" date="2005-04" db="UniProtKB">
        <title>Bioactive peptides derived from the venom of the South American tree frog, Phyllomedusa hypochondrialis.</title>
        <authorList>
            <person name="Thompson A.H."/>
        </authorList>
    </citation>
    <scope>PROTEIN SEQUENCE</scope>
    <scope>MASS SPECTROMETRY</scope>
    <scope>PYROGLUTAMATE FORMATION AT GLN-1</scope>
    <source>
        <tissue>Venom</tissue>
    </source>
</reference>
<keyword id="KW-0903">Direct protein sequencing</keyword>
<keyword id="KW-0873">Pyrrolidone carboxylic acid</keyword>
<keyword id="KW-0964">Secreted</keyword>
<name>BIOP1_PITHY</name>